<evidence type="ECO:0000250" key="1">
    <source>
        <dbReference type="UniProtKB" id="G3CJS0"/>
    </source>
</evidence>
<evidence type="ECO:0000250" key="2">
    <source>
        <dbReference type="UniProtKB" id="Q04669"/>
    </source>
</evidence>
<evidence type="ECO:0000250" key="3">
    <source>
        <dbReference type="UniProtKB" id="Q18NS7"/>
    </source>
</evidence>
<evidence type="ECO:0000250" key="4">
    <source>
        <dbReference type="UniProtKB" id="Q27049"/>
    </source>
</evidence>
<evidence type="ECO:0000255" key="5"/>
<evidence type="ECO:0000269" key="6">
    <source>
    </source>
</evidence>
<evidence type="ECO:0000269" key="7">
    <source>
    </source>
</evidence>
<evidence type="ECO:0000303" key="8">
    <source>
    </source>
</evidence>
<evidence type="ECO:0000303" key="9">
    <source>
    </source>
</evidence>
<evidence type="ECO:0000305" key="10"/>
<evidence type="ECO:0000305" key="11">
    <source>
    </source>
</evidence>
<evidence type="ECO:0000312" key="12">
    <source>
        <dbReference type="EMBL" id="AAA30329.1"/>
    </source>
</evidence>
<sequence length="188" mass="20761">MKVIIAATLLGILMHAFAEECELMPPGDNFDLEKYFSIPHVYVTHSRNGPKEQVCREYKTTKNSDGTTTTLVTSDYKTGGKPYHSELKCTNTPKSGVKGQFSVECEVPNGNGGKKKIHVETSVIATDYKNYALLQSCTKTESGIADDVLLLQTKKEGVDPGVTSVLKSVNWSLDDWFSRSKVNCDNMK</sequence>
<proteinExistence type="evidence at protein level"/>
<dbReference type="EMBL" id="L11310">
    <property type="protein sequence ID" value="AAA30329.1"/>
    <property type="molecule type" value="mRNA"/>
</dbReference>
<dbReference type="PIR" id="A53329">
    <property type="entry name" value="A53329"/>
</dbReference>
<dbReference type="PIR" id="B53329">
    <property type="entry name" value="B53329"/>
</dbReference>
<dbReference type="SMR" id="Q27042"/>
<dbReference type="GO" id="GO:0005576">
    <property type="term" value="C:extracellular region"/>
    <property type="evidence" value="ECO:0007669"/>
    <property type="project" value="UniProtKB-SubCell"/>
</dbReference>
<dbReference type="GO" id="GO:0090729">
    <property type="term" value="F:toxin activity"/>
    <property type="evidence" value="ECO:0007669"/>
    <property type="project" value="UniProtKB-KW"/>
</dbReference>
<dbReference type="GO" id="GO:0030682">
    <property type="term" value="P:symbiont-mediated perturbation of host defenses"/>
    <property type="evidence" value="ECO:0007669"/>
    <property type="project" value="InterPro"/>
</dbReference>
<dbReference type="CDD" id="cd19423">
    <property type="entry name" value="lipocalin_LTBP1-like"/>
    <property type="match status" value="1"/>
</dbReference>
<dbReference type="Gene3D" id="2.40.128.20">
    <property type="match status" value="1"/>
</dbReference>
<dbReference type="InterPro" id="IPR012674">
    <property type="entry name" value="Calycin"/>
</dbReference>
<dbReference type="InterPro" id="IPR005657">
    <property type="entry name" value="Triabi/Procalin"/>
</dbReference>
<dbReference type="Pfam" id="PF03973">
    <property type="entry name" value="Triabin"/>
    <property type="match status" value="1"/>
</dbReference>
<dbReference type="SUPFAM" id="SSF50814">
    <property type="entry name" value="Lipocalins"/>
    <property type="match status" value="1"/>
</dbReference>
<organism>
    <name type="scientific">Meccus pallidipennis</name>
    <name type="common">Triatomine bug</name>
    <name type="synonym">Triatoma pallidipennis</name>
    <dbReference type="NCBI Taxonomy" id="30077"/>
    <lineage>
        <taxon>Eukaryota</taxon>
        <taxon>Metazoa</taxon>
        <taxon>Ecdysozoa</taxon>
        <taxon>Arthropoda</taxon>
        <taxon>Hexapoda</taxon>
        <taxon>Insecta</taxon>
        <taxon>Pterygota</taxon>
        <taxon>Neoptera</taxon>
        <taxon>Paraneoptera</taxon>
        <taxon>Hemiptera</taxon>
        <taxon>Heteroptera</taxon>
        <taxon>Panheteroptera</taxon>
        <taxon>Cimicomorpha</taxon>
        <taxon>Reduviidae</taxon>
        <taxon>Triatominae</taxon>
        <taxon>Meccus</taxon>
    </lineage>
</organism>
<comment type="function">
    <text evidence="1 2 3 6 7">Has been described as a specific inhibitor of collagen-induced platelet aggregation (PubMed:8106481). However, as it does not affect platelet shape change or adhesion, it is plausible that it exerts its antiplatelet activity by a mechanism similar to that of triplatin, moubatin and dipetalodipin as scavenging eicosanoids involved in inflammation such as thromboxane A2 (TXA2) (By similarity) (PubMed:20889972).</text>
</comment>
<comment type="subcellular location">
    <subcellularLocation>
        <location evidence="11">Secreted</location>
    </subcellularLocation>
</comment>
<comment type="tissue specificity">
    <text evidence="11">Expressed in salivary glands.</text>
</comment>
<comment type="similarity">
    <text evidence="10">Belongs to the calycin superfamily. Triabin family.</text>
</comment>
<accession>Q27042</accession>
<reference evidence="12" key="1">
    <citation type="journal article" date="1994" name="J. Biol. Chem.">
        <title>An inhibitor of collagen-induced platelet aggregation from the saliva of Triatoma pallidipennis.</title>
        <authorList>
            <person name="Noeske-Jungblut C."/>
            <person name="Kratzschmar J."/>
            <person name="Haendler B."/>
            <person name="Alagon A."/>
            <person name="Possani L."/>
            <person name="Verhallen P."/>
            <person name="Donner P."/>
            <person name="Schleuning W.D."/>
        </authorList>
    </citation>
    <scope>NUCLEOTIDE SEQUENCE [MRNA]</scope>
    <scope>PROTEIN SEQUENCE OF 19-38</scope>
    <scope>FUNCTION</scope>
    <scope>RECOMBINANT EXPRESSION</scope>
    <source>
        <tissue>Saliva</tissue>
        <tissue>Salivary gland</tissue>
    </source>
</reference>
<reference key="2">
    <citation type="journal article" date="2010" name="J. Biol. Chem.">
        <title>Dipetalodipin, a novel multifunctional salivary lipocalin that inhibits platelet aggregation, vasoconstriction, and angiogenesis through unique binding specificity for TXA2, PGF2alpha, and 15(S)-HETE.</title>
        <authorList>
            <person name="Assumpcao T.C."/>
            <person name="Alvarenga P.H."/>
            <person name="Ribeiro J.M."/>
            <person name="Andersen J.F."/>
            <person name="Francischetti I.M."/>
        </authorList>
    </citation>
    <scope>3D-STRUCTURE MODELING</scope>
    <scope>PROBABLE FUNCTION</scope>
</reference>
<name>PALL_MECPA</name>
<feature type="signal peptide" evidence="5">
    <location>
        <begin position="1"/>
        <end position="18"/>
    </location>
</feature>
<feature type="chain" id="PRO_5004203121" description="Pallidipin">
    <location>
        <begin position="19"/>
        <end position="188"/>
    </location>
</feature>
<feature type="disulfide bond" evidence="4">
    <location>
        <begin position="21"/>
        <end position="137"/>
    </location>
</feature>
<feature type="disulfide bond" evidence="4">
    <location>
        <begin position="55"/>
        <end position="184"/>
    </location>
</feature>
<feature type="disulfide bond" evidence="4">
    <location>
        <begin position="89"/>
        <end position="105"/>
    </location>
</feature>
<feature type="sequence variant" description="In pallidipin-1." evidence="7">
    <original>V</original>
    <variation>G</variation>
    <location>
        <position position="97"/>
    </location>
</feature>
<protein>
    <recommendedName>
        <fullName evidence="8">Pallidipin</fullName>
    </recommendedName>
    <alternativeName>
        <fullName evidence="8 9 12">Pallidipin 2</fullName>
    </alternativeName>
</protein>
<keyword id="KW-0903">Direct protein sequencing</keyword>
<keyword id="KW-1015">Disulfide bond</keyword>
<keyword id="KW-1199">Hemostasis impairing toxin</keyword>
<keyword id="KW-1201">Platelet aggregation inhibiting toxin</keyword>
<keyword id="KW-0964">Secreted</keyword>
<keyword id="KW-0732">Signal</keyword>
<keyword id="KW-0800">Toxin</keyword>